<feature type="chain" id="PRO_0000152867" description="Phosphomethylpyrimidine synthase 1">
    <location>
        <begin position="1"/>
        <end position="433"/>
    </location>
</feature>
<feature type="binding site" evidence="1">
    <location>
        <position position="95"/>
    </location>
    <ligand>
        <name>substrate</name>
    </ligand>
</feature>
<feature type="binding site" evidence="1">
    <location>
        <position position="124"/>
    </location>
    <ligand>
        <name>substrate</name>
    </ligand>
</feature>
<feature type="binding site" evidence="1">
    <location>
        <position position="163"/>
    </location>
    <ligand>
        <name>substrate</name>
    </ligand>
</feature>
<feature type="binding site" evidence="1">
    <location>
        <begin position="185"/>
        <end position="187"/>
    </location>
    <ligand>
        <name>substrate</name>
    </ligand>
</feature>
<feature type="binding site" evidence="1">
    <location>
        <begin position="226"/>
        <end position="229"/>
    </location>
    <ligand>
        <name>substrate</name>
    </ligand>
</feature>
<feature type="binding site" evidence="1">
    <location>
        <position position="265"/>
    </location>
    <ligand>
        <name>substrate</name>
    </ligand>
</feature>
<feature type="binding site" evidence="1">
    <location>
        <position position="269"/>
    </location>
    <ligand>
        <name>Zn(2+)</name>
        <dbReference type="ChEBI" id="CHEBI:29105"/>
    </ligand>
</feature>
<feature type="binding site" evidence="1">
    <location>
        <position position="292"/>
    </location>
    <ligand>
        <name>substrate</name>
    </ligand>
</feature>
<feature type="binding site" evidence="1">
    <location>
        <position position="333"/>
    </location>
    <ligand>
        <name>Zn(2+)</name>
        <dbReference type="ChEBI" id="CHEBI:29105"/>
    </ligand>
</feature>
<feature type="binding site" evidence="1">
    <location>
        <position position="408"/>
    </location>
    <ligand>
        <name>[4Fe-4S] cluster</name>
        <dbReference type="ChEBI" id="CHEBI:49883"/>
        <note>4Fe-4S-S-AdoMet</note>
    </ligand>
</feature>
<feature type="binding site" evidence="1">
    <location>
        <position position="411"/>
    </location>
    <ligand>
        <name>[4Fe-4S] cluster</name>
        <dbReference type="ChEBI" id="CHEBI:49883"/>
        <note>4Fe-4S-S-AdoMet</note>
    </ligand>
</feature>
<feature type="binding site" evidence="1">
    <location>
        <position position="415"/>
    </location>
    <ligand>
        <name>[4Fe-4S] cluster</name>
        <dbReference type="ChEBI" id="CHEBI:49883"/>
        <note>4Fe-4S-S-AdoMet</note>
    </ligand>
</feature>
<reference key="1">
    <citation type="journal article" date="1997" name="J. Bacteriol.">
        <title>Complete genome sequence of Methanobacterium thermoautotrophicum deltaH: functional analysis and comparative genomics.</title>
        <authorList>
            <person name="Smith D.R."/>
            <person name="Doucette-Stamm L.A."/>
            <person name="Deloughery C."/>
            <person name="Lee H.-M."/>
            <person name="Dubois J."/>
            <person name="Aldredge T."/>
            <person name="Bashirzadeh R."/>
            <person name="Blakely D."/>
            <person name="Cook R."/>
            <person name="Gilbert K."/>
            <person name="Harrison D."/>
            <person name="Hoang L."/>
            <person name="Keagle P."/>
            <person name="Lumm W."/>
            <person name="Pothier B."/>
            <person name="Qiu D."/>
            <person name="Spadafora R."/>
            <person name="Vicare R."/>
            <person name="Wang Y."/>
            <person name="Wierzbowski J."/>
            <person name="Gibson R."/>
            <person name="Jiwani N."/>
            <person name="Caruso A."/>
            <person name="Bush D."/>
            <person name="Safer H."/>
            <person name="Patwell D."/>
            <person name="Prabhakar S."/>
            <person name="McDougall S."/>
            <person name="Shimer G."/>
            <person name="Goyal A."/>
            <person name="Pietrovski S."/>
            <person name="Church G.M."/>
            <person name="Daniels C.J."/>
            <person name="Mao J.-I."/>
            <person name="Rice P."/>
            <person name="Noelling J."/>
            <person name="Reeve J.N."/>
        </authorList>
    </citation>
    <scope>NUCLEOTIDE SEQUENCE [LARGE SCALE GENOMIC DNA]</scope>
    <source>
        <strain>ATCC 29096 / DSM 1053 / JCM 10044 / NBRC 100330 / Delta H</strain>
    </source>
</reference>
<evidence type="ECO:0000255" key="1">
    <source>
        <dbReference type="HAMAP-Rule" id="MF_00089"/>
    </source>
</evidence>
<sequence length="433" mass="47290">MTQMDEAKKGVITDEMKAVAEAENVTPEFVRRGVASGKIAIPSNLNREEVAAVGIGAGLRTKVNATIGTSTDIVDFDMEEEKARIAIENRADTLMELSVGGDLDEIRRRILDLSPIPVGSVPVYQAAIETIREKGASIYMDEDVMFRAIEKQAKDGIDFMAIHCSVNRETLRRLKRQGREGGLVSRGGAFVSAWMVENGLENPLYENFDYILEIAKEHDFVLSMANAMRAGAIADSTDRAQVQELIVLGELIDRAREAGVQTIVEGPGHIPLNEIKANVILQKKLCRGAPFYMLGPIVTDIGAGYDHIVSSIGAAASAAAGADFICYVTPAEHLALPYPDDVKEGVIATRIGAYVGDMVKGIHNGEKDLEMANARKKLNWEAQFDAAMCPAEARRIRDERPPEDPDTCTMCGEYCAVKIVNEWLDSADTRIFD</sequence>
<protein>
    <recommendedName>
        <fullName evidence="1">Phosphomethylpyrimidine synthase 1</fullName>
        <ecNumber evidence="1">4.1.99.17</ecNumber>
    </recommendedName>
    <alternativeName>
        <fullName evidence="1">Hydroxymethylpyrimidine phosphate synthase 1</fullName>
        <shortName evidence="1">HMP-P synthase 1</shortName>
        <shortName evidence="1">HMP-phosphate synthase 1</shortName>
        <shortName evidence="1">HMPP synthase 1</shortName>
    </alternativeName>
    <alternativeName>
        <fullName evidence="1">Thiamine biosynthesis protein ThiC 1</fullName>
    </alternativeName>
</protein>
<accession>O27586</accession>
<dbReference type="EC" id="4.1.99.17" evidence="1"/>
<dbReference type="EMBL" id="AE000666">
    <property type="protein sequence ID" value="AAB86017.1"/>
    <property type="molecule type" value="Genomic_DNA"/>
</dbReference>
<dbReference type="PIR" id="H69072">
    <property type="entry name" value="H69072"/>
</dbReference>
<dbReference type="SMR" id="O27586"/>
<dbReference type="STRING" id="187420.MTH_1543"/>
<dbReference type="PaxDb" id="187420-MTH_1543"/>
<dbReference type="EnsemblBacteria" id="AAB86017">
    <property type="protein sequence ID" value="AAB86017"/>
    <property type="gene ID" value="MTH_1543"/>
</dbReference>
<dbReference type="KEGG" id="mth:MTH_1543"/>
<dbReference type="PATRIC" id="fig|187420.15.peg.1506"/>
<dbReference type="HOGENOM" id="CLU_013181_2_2_2"/>
<dbReference type="InParanoid" id="O27586"/>
<dbReference type="UniPathway" id="UPA00060"/>
<dbReference type="Proteomes" id="UP000005223">
    <property type="component" value="Chromosome"/>
</dbReference>
<dbReference type="GO" id="GO:0051539">
    <property type="term" value="F:4 iron, 4 sulfur cluster binding"/>
    <property type="evidence" value="ECO:0007669"/>
    <property type="project" value="UniProtKB-KW"/>
</dbReference>
<dbReference type="GO" id="GO:0016830">
    <property type="term" value="F:carbon-carbon lyase activity"/>
    <property type="evidence" value="ECO:0007669"/>
    <property type="project" value="InterPro"/>
</dbReference>
<dbReference type="GO" id="GO:0008270">
    <property type="term" value="F:zinc ion binding"/>
    <property type="evidence" value="ECO:0007669"/>
    <property type="project" value="UniProtKB-UniRule"/>
</dbReference>
<dbReference type="GO" id="GO:0009228">
    <property type="term" value="P:thiamine biosynthetic process"/>
    <property type="evidence" value="ECO:0007669"/>
    <property type="project" value="UniProtKB-KW"/>
</dbReference>
<dbReference type="GO" id="GO:0009229">
    <property type="term" value="P:thiamine diphosphate biosynthetic process"/>
    <property type="evidence" value="ECO:0007669"/>
    <property type="project" value="UniProtKB-UniRule"/>
</dbReference>
<dbReference type="Gene3D" id="3.20.20.540">
    <property type="entry name" value="Radical SAM ThiC family, central domain"/>
    <property type="match status" value="1"/>
</dbReference>
<dbReference type="HAMAP" id="MF_00089">
    <property type="entry name" value="ThiC"/>
    <property type="match status" value="1"/>
</dbReference>
<dbReference type="InterPro" id="IPR011060">
    <property type="entry name" value="RibuloseP-bd_barrel"/>
</dbReference>
<dbReference type="InterPro" id="IPR037509">
    <property type="entry name" value="ThiC"/>
</dbReference>
<dbReference type="InterPro" id="IPR038521">
    <property type="entry name" value="ThiC/Bza_core_dom"/>
</dbReference>
<dbReference type="InterPro" id="IPR002817">
    <property type="entry name" value="ThiC/BzaA/B"/>
</dbReference>
<dbReference type="NCBIfam" id="NF009895">
    <property type="entry name" value="PRK13352.1"/>
    <property type="match status" value="1"/>
</dbReference>
<dbReference type="NCBIfam" id="TIGR00190">
    <property type="entry name" value="thiC"/>
    <property type="match status" value="1"/>
</dbReference>
<dbReference type="PANTHER" id="PTHR30557:SF1">
    <property type="entry name" value="PHOSPHOMETHYLPYRIMIDINE SYNTHASE, CHLOROPLASTIC"/>
    <property type="match status" value="1"/>
</dbReference>
<dbReference type="PANTHER" id="PTHR30557">
    <property type="entry name" value="THIAMINE BIOSYNTHESIS PROTEIN THIC"/>
    <property type="match status" value="1"/>
</dbReference>
<dbReference type="Pfam" id="PF01964">
    <property type="entry name" value="ThiC_Rad_SAM"/>
    <property type="match status" value="1"/>
</dbReference>
<dbReference type="SFLD" id="SFLDF00407">
    <property type="entry name" value="phosphomethylpyrimidine_syntha"/>
    <property type="match status" value="1"/>
</dbReference>
<dbReference type="SFLD" id="SFLDG01114">
    <property type="entry name" value="phosphomethylpyrimidine_syntha"/>
    <property type="match status" value="1"/>
</dbReference>
<dbReference type="SFLD" id="SFLDS00113">
    <property type="entry name" value="Radical_SAM_Phosphomethylpyrim"/>
    <property type="match status" value="1"/>
</dbReference>
<dbReference type="SUPFAM" id="SSF51366">
    <property type="entry name" value="Ribulose-phoshate binding barrel"/>
    <property type="match status" value="1"/>
</dbReference>
<comment type="function">
    <text evidence="1">Catalyzes the synthesis of the hydroxymethylpyrimidine phosphate (HMP-P) moiety of thiamine from aminoimidazole ribotide (AIR) in a radical S-adenosyl-L-methionine (SAM)-dependent reaction.</text>
</comment>
<comment type="catalytic activity">
    <reaction evidence="1">
        <text>5-amino-1-(5-phospho-beta-D-ribosyl)imidazole + S-adenosyl-L-methionine = 4-amino-2-methyl-5-(phosphooxymethyl)pyrimidine + CO + 5'-deoxyadenosine + formate + L-methionine + 3 H(+)</text>
        <dbReference type="Rhea" id="RHEA:24840"/>
        <dbReference type="ChEBI" id="CHEBI:15378"/>
        <dbReference type="ChEBI" id="CHEBI:15740"/>
        <dbReference type="ChEBI" id="CHEBI:17245"/>
        <dbReference type="ChEBI" id="CHEBI:17319"/>
        <dbReference type="ChEBI" id="CHEBI:57844"/>
        <dbReference type="ChEBI" id="CHEBI:58354"/>
        <dbReference type="ChEBI" id="CHEBI:59789"/>
        <dbReference type="ChEBI" id="CHEBI:137981"/>
        <dbReference type="EC" id="4.1.99.17"/>
    </reaction>
</comment>
<comment type="cofactor">
    <cofactor evidence="1">
        <name>[4Fe-4S] cluster</name>
        <dbReference type="ChEBI" id="CHEBI:49883"/>
    </cofactor>
    <text evidence="1">Binds 1 [4Fe-4S] cluster per subunit. The cluster is coordinated with 3 cysteines and an exchangeable S-adenosyl-L-methionine.</text>
</comment>
<comment type="pathway">
    <text evidence="1">Cofactor biosynthesis; thiamine diphosphate biosynthesis.</text>
</comment>
<comment type="similarity">
    <text evidence="1">Belongs to the ThiC family.</text>
</comment>
<organism>
    <name type="scientific">Methanothermobacter thermautotrophicus (strain ATCC 29096 / DSM 1053 / JCM 10044 / NBRC 100330 / Delta H)</name>
    <name type="common">Methanobacterium thermoautotrophicum</name>
    <dbReference type="NCBI Taxonomy" id="187420"/>
    <lineage>
        <taxon>Archaea</taxon>
        <taxon>Methanobacteriati</taxon>
        <taxon>Methanobacteriota</taxon>
        <taxon>Methanomada group</taxon>
        <taxon>Methanobacteria</taxon>
        <taxon>Methanobacteriales</taxon>
        <taxon>Methanobacteriaceae</taxon>
        <taxon>Methanothermobacter</taxon>
    </lineage>
</organism>
<keyword id="KW-0004">4Fe-4S</keyword>
<keyword id="KW-0408">Iron</keyword>
<keyword id="KW-0411">Iron-sulfur</keyword>
<keyword id="KW-0456">Lyase</keyword>
<keyword id="KW-0479">Metal-binding</keyword>
<keyword id="KW-1185">Reference proteome</keyword>
<keyword id="KW-0949">S-adenosyl-L-methionine</keyword>
<keyword id="KW-0784">Thiamine biosynthesis</keyword>
<keyword id="KW-0862">Zinc</keyword>
<name>THIC1_METTH</name>
<proteinExistence type="inferred from homology"/>
<gene>
    <name evidence="1" type="primary">thiC1</name>
    <name type="ordered locus">MTH_1543</name>
</gene>